<name>R1A_IBVB</name>
<sequence>MASSLKQGVSPKPRDVILVSKDIPEQLCDALFFYTSHNPKDYADAFAVRQKFDRSLQTGKQFKFETVCGLFLLKGVDKITPGVPAKVLKATSKLADLEDIFGVSPLARKYRELLKTACQWSLTVEALDVRAQTLDEIFDPTEILWLQVAAKIHVSSMAMRRLVGEVTAKVMDALGSNLSALFQIVKQQIARIFQKALAIFENVNELPQRIAALKMAFAKCARSITVVVVERTLVVKEFAGTCLASINGAVAKFFEELPNGFMGSKIFTTLAFFKEAAVRVVENIPNAPRGTKGFEVVGNAKGTQVVVRGMRNDLTLLDQKADIPVEPEGWSAILDGHLCYVFRSGDRFYAAPLSGNFALSDVHCCERVVCLSDGVTPEINDGLILAAIYSSFSVSELVTALKKGEPFKFLGHKFVYAKDAAVSFTLAKAATIADVLRLFQSARVIAEDVWSSFTEKSFEFWKLAYGKVRNLEEFVKTYVCKAQMSIVILAAVLGEDIWHLVSQVIYKLGVLFTKVVDFCDKHWKGFCVQLKRAKLIVTETFCVLKGVAQHCFQLLLDAIHSLYKSFKKCALGRIHGDLLFWKGGVHKIVQDGDEIWFDAIDSVDVEDLGVVQEKSIDFEVCDDVTLPENQPGHMVQIEDDGKNYMFFRFKKDENIYYTPMSQLGAINVVCKAGGKTVTFGETTVQEIPPPDVVPIKVSIECCGEPWNTIFKKAYKEPIEVDTDLTVEQLLSVIYEKMCDDLKLFPEAPEPPPFENVALVDKNGKDLDCIKSCHLIYRDYESDDDIEEEDAEECDTDSGEAEECDTNSECEEEDEDTKVLALIQDPASIKYPLPLDEDYSVYNGCIVHKDALDVVNLPSGEETFVVNNCFEGAVKPLPQKVVDVLGDWGEAVDAQEQLCQQEPLQHTFEEPVENSTGSSKTMTEQVVVEDQELPVVEQDQDVVVYTPTDLEVAKETAEEVDEFILIFAVPKEEVVSQKDGAQIKQEPIQVVKPQREKKAKKFKVKPATCEKPKFLEYKTCVGDLTVVIAKALDEFKEFCIVNAANEHMTHGSGVAKAIADFCGLDFVEYCEDYVKKHGPQQRLVTPSFVKGIQCVNNVVGPRHGDNNLHEKLVAAYKNVLVDGVVNYVVPVLSLGIFGVDFKMSIDAMREAFEGCTIRVLLFSLSQEHIDYFDVTCKQKTIYLTEDGVKYRSIVLKPGDSLGQFGQVYAKNKIVFTADDVEDKEILYVPTTDKSILEYYGLDAQKYVIYLQTLAQKWNVQYRDNFLILEWRDGNCWISSAIVLLQAAKIRFKGFLTEAWAKLLGGDPTDFVAWCYASCTAKVGDFSDANWLLANLAEHFDADYTNAFLKKRVSCNCGIKSYELRGLEACIQPVRATNLLHFKTQYSNCPTCGANNTDEVIEASLPYLLLFATDGPATVDCDEDAVGTVVFVGSTNSGHCYTQAAGQAFDNLAKDRKFGKKSPYITAMYTRFAFKNETSLPVAKQSKGKSKSVKEDVSNLATSSKASFDNLTDFEQWYDSNIYESLKVQESPDNFDKYVSFTTKEDSKLPLTLKVRGIKSVVDFRSKDGFIYKLTPDTDENSKAPVYYPVLDAISLKAIWVEGNANFVVGHPNYYSKSLHIPTFWENAENFVKMGDKIGGVTMGLWRAEHLNKPNLERIFNIAKKAIVGSSVVTTQCGKLIGKAATFIADKVGGGVVRNITDSIKGLCGITRGHFERKMSPQFLKTLMFFLFYFLKASVKSVVASYKTVLCKVVLATLLIVWFVYTSNPVMFTGIRVLDFLFEGSLCGPYKDYGKDSFDVLRYCADDFICRVCLHDKDSLHLYKHAYSVEQVYKDAASGFIFNWNWLYLVFLILFVKPVAGFVIICYCVKYLVLNSTVLQTGVCFLDWFVQTVFSHFNFMGAGFYFWLFYKIYIQVHHILYCKDVTCEVCKRVARSNRQEVSVVVGGRKQIVHVYTNSGYNFCKRHNWYCRNCDDYGHQNTFMSPEVAGELSEKLKRHVKPTAYAYHVVDEACLVDDFVNLKYKAATPGKDSASSAVKCFSVTDFLKKAVFLKEALKCEQISNDGFIVCNTQSAHALEEAKNAAIYYAQYLCKPILILDQALYEQLVVEPVSKSVIDKVCSILSSIISVDTAALNYKAGTLRDALLSITKDEEAVDMAIFCHNHDVDYTGDGFTNVIPSYGIDTGKLTPRDRGFLINADASIANLRVKNAPPVVWKFSELIKLSDSCLKYLISATVKSGVRFFITKSGAKQVIACHTQKLLVEKKAGGIVSGTFKCFKSYFKWLLIFYILFTACCSGYYYMEVSKSFVHPMYDVNSTLHVEGFKVIDKGVLREIVPEDTCFSNKFVNFDAFWGRPYDNSRNCPIVTAVIDGDGTVATGVPGFVSWVMDGVMFIHMTQTERKPWYIPTWFNREIVGYTQDSIITEGSFYTSIALFSARCLYLTASNTPQLYCFNGDNDAPGALPFGSIIPHRVYFQPNGVRLIVPQQILHTPYVVKFVSDSYCRGSVCEYTRPGYCVSLNPQWVLFNDEYTSKPGVFCGSTVRELMFSMVSTFFTGVNPNIYMQLATMFLILVVVVLIFAMVIKFQGVFKAYATTVFITMLVWVINAFILCVHSYNSVLAVILLVLYCYASLVTSRNTVIIMHCWLVFTFGLIVPTWLACCYLGFIIYMYTPLFLWCYGTTKNTRKLYDGNEFVGNYDLAAKSTFVIRGSEFVKLTNEIGDKFEAYLSAYARLKYYSGTGSEQDYLQACRAWLAYALDQYRNSGVEIVYTPPRYSIGVSRLQSGFKKLVSPSSAVEKCIVSVSYRGNNLNGLWLGDTIYCPRHVLGKFSGDQWNDVLNLANNHEFEVTTQHGVTLNVVSRRLKGAVLILQTAVANAETPKYKFIKANCGDSFTIACAYGGTVVGLYPVTMRSNGTIRASFLAGACGSVGFNIEKGVVNFFYMHHLELPNALHTGTDLMGEFYGGYVDEEVAQRVPPDNLVTNNIVAWLYAAIISVKESSFSLPKWLESTTVSVDDYNKWAGDNGFTPFSTSTAITKLSAITGVDVCKLLRTIMVKNSQWGGDPILGQYNFEDELTPESVFNQIGGVRLQSSFVRKATSWFWSRCVLACFLFVLCAIVLFTAVPLKFYVYAAVILLMAVLFISFTVKHVMAYMDTFLLPTLITVIIGVCAEVPFIYNTLISQVVIFLSQWYDPVVFDTMVPWMFLPLVLYTAFKCVQGCYMNSFNTSLLMLYQFVKLGFVIYTSSNTLTAYTEGNWELFFELVHTTVLANVSSNSLIGLFVFKCAKWMLYYCNATYLNNYVLMAVMVNCIGWLCTCYFGLYWWVNKVFGLTLGKYNFKVSVDQYRYMCLHKINPPKTVWEVFSTNILIQGIGGDRVLPIATVQAKLSDVKCTTVVLMQLLTKLNVEANSKMHVYLVELHNKILASDDVGECMDNLLGMLITLFCIDSTIDLSEYCDDILKRSTVLQSVTQEFSHIPSYAEYERAKNLYEKVLVDSKNGGVTQQELAAYRKAANIAKSVFDRDLAVQKKLDSMAERAMTTMYKEARVTDRRAKLVSSLHALLFSMLKKIDSEKLNVLFDQASSGVVPLATVPIVCSNKLTLVIPDPETWVKCVEGVHVTYSTVVWNIDTVIDADGTELHPTSTGSGLTYCISGANIAWPLKVNLTRNGHNKVDVVLQNNELMPHGVKTKACVAGVDQAHCSVESKCYYTNISGNSVVAAITSSNPNLKVASFLNEAGNQIYVDLDPPCKFGMKVGVKVEVVYLYFIKNTRSIVRGMVLGAISNVVVLQSKGHETEEVDAVGILSLCSFAVDPADTYCKYVAAGNQPLGNCVKMLTVHNGSGFAITSKPSPTPDQDSYGGASVCLYCRAHIAHPGSVGNLDGRCQFKGSFVQIPTTEKDPVGFCLRNKVCTVCQCWIGYGCQCDSLRQPKSSVQSVAGASDFDKNYLNGYGVAVRLG</sequence>
<evidence type="ECO:0000250" key="1"/>
<evidence type="ECO:0000250" key="2">
    <source>
        <dbReference type="UniProtKB" id="P0C6U8"/>
    </source>
</evidence>
<evidence type="ECO:0000250" key="3">
    <source>
        <dbReference type="UniProtKB" id="P0C6Y1"/>
    </source>
</evidence>
<evidence type="ECO:0000250" key="4">
    <source>
        <dbReference type="UniProtKB" id="P0C6Y3"/>
    </source>
</evidence>
<evidence type="ECO:0000250" key="5">
    <source>
        <dbReference type="UniProtKB" id="P0DTD1"/>
    </source>
</evidence>
<evidence type="ECO:0000255" key="6"/>
<evidence type="ECO:0000255" key="7">
    <source>
        <dbReference type="PROSITE-ProRule" id="PRU00214"/>
    </source>
</evidence>
<evidence type="ECO:0000255" key="8">
    <source>
        <dbReference type="PROSITE-ProRule" id="PRU00444"/>
    </source>
</evidence>
<evidence type="ECO:0000255" key="9">
    <source>
        <dbReference type="PROSITE-ProRule" id="PRU00490"/>
    </source>
</evidence>
<evidence type="ECO:0000255" key="10">
    <source>
        <dbReference type="PROSITE-ProRule" id="PRU00772"/>
    </source>
</evidence>
<evidence type="ECO:0000255" key="11">
    <source>
        <dbReference type="PROSITE-ProRule" id="PRU01291"/>
    </source>
</evidence>
<evidence type="ECO:0000255" key="12">
    <source>
        <dbReference type="PROSITE-ProRule" id="PRU01294"/>
    </source>
</evidence>
<evidence type="ECO:0000255" key="13">
    <source>
        <dbReference type="PROSITE-ProRule" id="PRU01295"/>
    </source>
</evidence>
<evidence type="ECO:0000255" key="14">
    <source>
        <dbReference type="PROSITE-ProRule" id="PRU01296"/>
    </source>
</evidence>
<evidence type="ECO:0000255" key="15">
    <source>
        <dbReference type="PROSITE-ProRule" id="PRU01297"/>
    </source>
</evidence>
<evidence type="ECO:0000255" key="16">
    <source>
        <dbReference type="PROSITE-ProRule" id="PRU01336"/>
    </source>
</evidence>
<evidence type="ECO:0000255" key="17">
    <source>
        <dbReference type="PROSITE-ProRule" id="PRU01337"/>
    </source>
</evidence>
<evidence type="ECO:0000256" key="18">
    <source>
        <dbReference type="SAM" id="MobiDB-lite"/>
    </source>
</evidence>
<evidence type="ECO:0000269" key="19">
    <source>
    </source>
</evidence>
<evidence type="ECO:0000269" key="20">
    <source>
    </source>
</evidence>
<evidence type="ECO:0000269" key="21">
    <source>
    </source>
</evidence>
<evidence type="ECO:0000269" key="22">
    <source>
    </source>
</evidence>
<evidence type="ECO:0000269" key="23">
    <source>
    </source>
</evidence>
<evidence type="ECO:0000269" key="24">
    <source>
    </source>
</evidence>
<evidence type="ECO:0000305" key="25"/>
<comment type="function">
    <molecule>Isoform Replicase polyprotein 1a</molecule>
    <text evidence="25">Multifunctional protein involved in the transcription and replication of viral RNAs. Contains the proteinases responsible for the cleavages of the polyprotein.</text>
</comment>
<comment type="function">
    <molecule>Non-structural protein 2</molecule>
    <text evidence="2">May play a role in the modulation of host cell survival signaling pathway by interacting with host PHB and PHB2 (By similarity). Indeed, these two proteins play a role in maintaining the functional integrity of the mitochondria and protecting cells from various stresses (By similarity).</text>
</comment>
<comment type="function">
    <molecule>Papain-like protease</molecule>
    <text evidence="2">Responsible for the cleavages located at the N-terminus of the replicase polyprotein (By similarity). In addition, PL-PRO possesses a deubiquitinating/deISGylating activity and processes both 'Lys-48'- and 'Lys-63'-linked polyubiquitin chains from cellular substrates (By similarity).</text>
</comment>
<comment type="function">
    <molecule>Non-structural protein 4</molecule>
    <text evidence="2">Plays a role in host membrane rearrangement that leads to creation of cytoplasmic double-membrane vesicles (DMV) necessary for viral replication (By similarity). Alone is able to induce paired membranes (By similarity). Coexpression of nsp3 and nsp4 does not result in the formation of DMVs (By similarity).</text>
</comment>
<comment type="function">
    <molecule>3C-like proteinase</molecule>
    <text evidence="10">Responsible for the majority of cleavages as it cleaves the C-terminus of replicase polyprotein at 11 sites. Recognizes substrates containing the core sequence [ILMVF]-Q-|-[SGACN]. Inhibited by the substrate-analog Cbz-Val-Asn-Ser-Thr-Leu-Gln-CMK.</text>
</comment>
<comment type="function">
    <molecule>Non-structural protein 7</molecule>
    <text evidence="2">Forms a hexadecamer with nsp8 (8 subunits of each) that may participate in viral replication by acting as a primase. Alternatively, may synthesize substantially longer products than oligonucleotide primers.</text>
</comment>
<comment type="function">
    <molecule>Non-structural protein 8</molecule>
    <text evidence="2">Forms a hexadecamer with nsp7 (8 subunits of each) that may participate in viral replication by acting as a primase. Alternatively, may synthesize substantially longer products than oligonucleotide primers.</text>
</comment>
<comment type="function">
    <molecule>Non-structural protein 9</molecule>
    <text evidence="2">Plays an essential role in viral replication by forming a homodimer that binds single-stranded RNA.</text>
</comment>
<comment type="function">
    <molecule>Non-structural protein 10</molecule>
    <text evidence="2">Plays a pivotal role in viral transcription by stimulating both nsp14 3'-5' exoribonuclease and nsp16 2'-O-methyltransferase activities (By similarity). Therefore plays an essential role in viral mRNAs cap methylation (By similarity).</text>
</comment>
<comment type="catalytic activity">
    <molecule>Papain-like protease</molecule>
    <reaction evidence="2">
        <text>Thiol-dependent hydrolysis of ester, thioester, amide, peptide and isopeptide bonds formed by the C-terminal Gly of ubiquitin (a 76-residue protein attached to proteins as an intracellular targeting signal).</text>
        <dbReference type="EC" id="3.4.19.12"/>
    </reaction>
</comment>
<comment type="cofactor">
    <molecule>Papain-like protease</molecule>
    <cofactor evidence="2">
        <name>Zn(2+)</name>
        <dbReference type="ChEBI" id="CHEBI:29105"/>
    </cofactor>
</comment>
<comment type="subunit">
    <molecule>Non-structural protein 2</molecule>
    <text evidence="2">Interacts with host PHB and PHB2.</text>
</comment>
<comment type="subunit">
    <molecule>Non-structural protein 4</molecule>
    <text evidence="2">Interacts with papain-like protease and non-structural protein 6.</text>
</comment>
<comment type="subunit">
    <molecule>3C-like proteinase</molecule>
    <text evidence="2">Monomer. Homodimer. Only the homodimer shows catalytic activity.</text>
</comment>
<comment type="subunit">
    <molecule>Non-structural protein 7</molecule>
    <text evidence="2">Eight copies of nsp7 and eight copies of nsp8 assemble to form a heterohexadecamer dsRNA-encircling ring structure.</text>
</comment>
<comment type="subunit">
    <molecule>Non-structural protein 8</molecule>
    <text evidence="2">Eight copies of nsp7 and eight copies of nsp8 assemble to form a heterohexadecamer dsRNA-encircling ring structure (By similarity). Interacts with ORF6 protein (By similarity).</text>
</comment>
<comment type="subunit">
    <molecule>Non-structural protein 9</molecule>
    <text evidence="2">Homodimer.</text>
</comment>
<comment type="subunit">
    <molecule>Non-structural protein 10</molecule>
    <text evidence="2">Homododecamer.</text>
</comment>
<comment type="interaction">
    <interactant intactId="EBI-25618172">
        <id>PRO_0000338322</id>
    </interactant>
    <interactant intactId="EBI-25618172">
        <id>PRO_0000338322</id>
        <label>1a</label>
        <dbReference type="UniProtKB" id="P0C6V3"/>
    </interactant>
    <organismsDiffer>false</organismsDiffer>
    <experiments>3</experiments>
</comment>
<comment type="subcellular location">
    <molecule>Papain-like protease</molecule>
    <subcellularLocation>
        <location evidence="4">Host endoplasmic reticulum membrane</location>
        <topology evidence="25">Multi-pass membrane protein</topology>
    </subcellularLocation>
    <subcellularLocation>
        <location evidence="2">Host cytoplasm</location>
    </subcellularLocation>
    <text evidence="4">Gammacoronaviruses induce membrane zippering to form zippered endoplasmic reticulum (zER).</text>
</comment>
<comment type="subcellular location">
    <molecule>Non-structural protein 4</molecule>
    <subcellularLocation>
        <location evidence="4">Host endoplasmic reticulum membrane</location>
        <topology evidence="25">Multi-pass membrane protein</topology>
    </subcellularLocation>
    <subcellularLocation>
        <location evidence="2">Host cytoplasm</location>
    </subcellularLocation>
    <text evidence="2 4">Localizes in virally-induced cytoplasmic double-membrane vesicles (By similarity). Gammacoronaviruses induce membrane zippering to form zippered endoplasmic reticulum (zER) (By similarity).</text>
</comment>
<comment type="subcellular location">
    <molecule>Non-structural protein 6</molecule>
    <subcellularLocation>
        <location evidence="4">Host endoplasmic reticulum membrane</location>
        <topology evidence="25">Multi-pass membrane protein</topology>
    </subcellularLocation>
    <text evidence="4">Gammacoronaviruses induce membrane zippering to form zippered endoplasmic reticulum (zER).</text>
</comment>
<comment type="subcellular location">
    <molecule>Non-structural protein 7</molecule>
    <subcellularLocation>
        <location evidence="1">Host cytoplasm</location>
        <location evidence="1">Host perinuclear region</location>
    </subcellularLocation>
    <subcellularLocation>
        <location evidence="5">Host cytoplasm</location>
    </subcellularLocation>
    <subcellularLocation>
        <location evidence="5">Host endoplasmic reticulum</location>
    </subcellularLocation>
    <text>nsp7, nsp8, nsp9 and nsp10 are localized in cytoplasmic foci, largely perinuclear. Late in infection, they merge into confluent complexes.</text>
</comment>
<comment type="subcellular location">
    <molecule>Non-structural protein 8</molecule>
    <subcellularLocation>
        <location evidence="2">Host cytoplasm</location>
        <location evidence="2">Host perinuclear region</location>
    </subcellularLocation>
    <subcellularLocation>
        <location evidence="5">Host cytoplasm</location>
    </subcellularLocation>
    <subcellularLocation>
        <location evidence="5">Host endoplasmic reticulum</location>
    </subcellularLocation>
    <text>nsp7, nsp8, nsp9 and nsp10 are localized in cytoplasmic foci, largely perinuclear. Late in infection, they merge into confluent complexes.</text>
</comment>
<comment type="subcellular location">
    <molecule>Non-structural protein 9</molecule>
    <subcellularLocation>
        <location evidence="1">Host cytoplasm</location>
        <location evidence="1">Host perinuclear region</location>
    </subcellularLocation>
    <subcellularLocation>
        <location evidence="5">Host cytoplasm</location>
    </subcellularLocation>
    <subcellularLocation>
        <location evidence="5">Host endoplasmic reticulum</location>
    </subcellularLocation>
    <text>nsp7, nsp8, nsp9 and nsp10 are localized in cytoplasmic foci, largely perinuclear. Late in infection, they merge into confluent complexes.</text>
</comment>
<comment type="subcellular location">
    <molecule>Non-structural protein 10</molecule>
    <subcellularLocation>
        <location evidence="1">Host cytoplasm</location>
        <location evidence="1">Host perinuclear region</location>
    </subcellularLocation>
    <subcellularLocation>
        <location evidence="5">Host cytoplasm</location>
    </subcellularLocation>
    <subcellularLocation>
        <location evidence="5">Host endoplasmic reticulum</location>
    </subcellularLocation>
    <text>nsp7, nsp8, nsp9 and nsp10 are localized in cytoplasmic foci, largely perinuclear. Late in infection, they merge into confluent complexes.</text>
</comment>
<comment type="alternative products">
    <event type="ribosomal frameshifting"/>
    <isoform>
        <id>P0C6V3-1</id>
        <name>Replicase polyprotein 1a</name>
        <name>pp1a</name>
        <name>ORF1a polyprotein</name>
        <sequence type="displayed"/>
    </isoform>
    <isoform>
        <id>P0C6Y1-1</id>
        <name>Replicase polyprotein 1ab</name>
        <name>pp1ab</name>
        <sequence type="external"/>
    </isoform>
    <text evidence="25">Isoform Replicase polyprotein 1ab is produced by -1 ribosomal frameshifting at the 1a-1b genes boundary. Isoform Replicase polyprotein 1a is produced by conventional translation.</text>
</comment>
<comment type="domain">
    <molecule>Papain-like protease</molecule>
    <text evidence="2">The hydrophobic region HD1 probably mediates the membrane association of the replication complex.</text>
</comment>
<comment type="domain">
    <molecule>Non-structural protein 4</molecule>
    <text evidence="2">The hydrophobic region HD2 probably mediates the membrane association of the replication complex.</text>
</comment>
<comment type="domain">
    <molecule>Non-structural protein 6</molecule>
    <text evidence="2">The hydrophobic region HD3 probably mediates the membrane association of the replication complex.</text>
</comment>
<comment type="PTM">
    <molecule>Isoform Replicase polyprotein 1a</molecule>
    <text evidence="2">Specific enzymatic cleavages in vivo by its own proteases yield mature proteins (By similarity). 3C-like proteinase nsp5 liberates nsps 6-16 from the polyprotein (By similarity). Papain-like and 3C-like proteinases are autocatalytically processed.</text>
</comment>
<comment type="PTM">
    <molecule>Non-structural protein 4</molecule>
    <text evidence="3">N-glycosylated.</text>
</comment>
<comment type="similarity">
    <text evidence="25">Belongs to the coronaviruses polyprotein 1ab family.</text>
</comment>
<dbReference type="EC" id="3.4.19.12" evidence="2"/>
<dbReference type="EC" id="3.4.22.-" evidence="2"/>
<dbReference type="EMBL" id="M94356">
    <property type="protein sequence ID" value="AAA46223.1"/>
    <property type="molecule type" value="Genomic_RNA"/>
</dbReference>
<dbReference type="EMBL" id="M95169">
    <property type="protein sequence ID" value="AAA70233.1"/>
    <property type="molecule type" value="Genomic_RNA"/>
</dbReference>
<dbReference type="EMBL" id="DQ001339">
    <property type="protein sequence ID" value="AAY24431.1"/>
    <property type="molecule type" value="Genomic_RNA"/>
</dbReference>
<dbReference type="PIR" id="A33094">
    <property type="entry name" value="VFIHB1"/>
</dbReference>
<dbReference type="PIR" id="B33094">
    <property type="entry name" value="VFIHB2"/>
</dbReference>
<dbReference type="SMR" id="P0C6V3"/>
<dbReference type="MEROPS" id="C16.005"/>
<dbReference type="MEROPS" id="C30.002"/>
<dbReference type="BRENDA" id="3.4.22.B14">
    <property type="organism ID" value="8728"/>
</dbReference>
<dbReference type="SABIO-RK" id="P0C6V3"/>
<dbReference type="Proteomes" id="UP000006717">
    <property type="component" value="Segment"/>
</dbReference>
<dbReference type="Proteomes" id="UP000180342">
    <property type="component" value="Genome"/>
</dbReference>
<dbReference type="GO" id="GO:0044167">
    <property type="term" value="C:host cell endoplasmic reticulum membrane"/>
    <property type="evidence" value="ECO:0007669"/>
    <property type="project" value="UniProtKB-SubCell"/>
</dbReference>
<dbReference type="GO" id="GO:0044220">
    <property type="term" value="C:host cell perinuclear region of cytoplasm"/>
    <property type="evidence" value="ECO:0007669"/>
    <property type="project" value="UniProtKB-SubCell"/>
</dbReference>
<dbReference type="GO" id="GO:0016020">
    <property type="term" value="C:membrane"/>
    <property type="evidence" value="ECO:0007669"/>
    <property type="project" value="UniProtKB-KW"/>
</dbReference>
<dbReference type="GO" id="GO:0004197">
    <property type="term" value="F:cysteine-type endopeptidase activity"/>
    <property type="evidence" value="ECO:0007669"/>
    <property type="project" value="InterPro"/>
</dbReference>
<dbReference type="GO" id="GO:0016829">
    <property type="term" value="F:lyase activity"/>
    <property type="evidence" value="ECO:0007669"/>
    <property type="project" value="UniProtKB-KW"/>
</dbReference>
<dbReference type="GO" id="GO:0008242">
    <property type="term" value="F:omega peptidase activity"/>
    <property type="evidence" value="ECO:0007669"/>
    <property type="project" value="InterPro"/>
</dbReference>
<dbReference type="GO" id="GO:0003723">
    <property type="term" value="F:RNA binding"/>
    <property type="evidence" value="ECO:0007669"/>
    <property type="project" value="UniProtKB-KW"/>
</dbReference>
<dbReference type="GO" id="GO:0016740">
    <property type="term" value="F:transferase activity"/>
    <property type="evidence" value="ECO:0007669"/>
    <property type="project" value="InterPro"/>
</dbReference>
<dbReference type="GO" id="GO:0008270">
    <property type="term" value="F:zinc ion binding"/>
    <property type="evidence" value="ECO:0007669"/>
    <property type="project" value="UniProtKB-KW"/>
</dbReference>
<dbReference type="GO" id="GO:0006508">
    <property type="term" value="P:proteolysis"/>
    <property type="evidence" value="ECO:0007669"/>
    <property type="project" value="UniProtKB-KW"/>
</dbReference>
<dbReference type="GO" id="GO:0010506">
    <property type="term" value="P:regulation of autophagy"/>
    <property type="evidence" value="ECO:0007669"/>
    <property type="project" value="InterPro"/>
</dbReference>
<dbReference type="GO" id="GO:0039520">
    <property type="term" value="P:symbiont-mediated activation of host autophagy"/>
    <property type="evidence" value="ECO:0007669"/>
    <property type="project" value="UniProtKB-KW"/>
</dbReference>
<dbReference type="GO" id="GO:0019079">
    <property type="term" value="P:viral genome replication"/>
    <property type="evidence" value="ECO:0007669"/>
    <property type="project" value="InterPro"/>
</dbReference>
<dbReference type="GO" id="GO:0019082">
    <property type="term" value="P:viral protein processing"/>
    <property type="evidence" value="ECO:0007669"/>
    <property type="project" value="InterPro"/>
</dbReference>
<dbReference type="GO" id="GO:0075523">
    <property type="term" value="P:viral translational frameshifting"/>
    <property type="evidence" value="ECO:0007669"/>
    <property type="project" value="UniProtKB-KW"/>
</dbReference>
<dbReference type="CDD" id="cd21512">
    <property type="entry name" value="cv_gamma-delta_Nsp2_IBV-like"/>
    <property type="match status" value="1"/>
</dbReference>
<dbReference type="CDD" id="cd21473">
    <property type="entry name" value="cv_Nsp4_TM"/>
    <property type="match status" value="1"/>
</dbReference>
<dbReference type="CDD" id="cd21559">
    <property type="entry name" value="gammaCoV-Nsp6"/>
    <property type="match status" value="1"/>
</dbReference>
<dbReference type="CDD" id="cd21902">
    <property type="entry name" value="gammaCoV_Nsp10"/>
    <property type="match status" value="1"/>
</dbReference>
<dbReference type="CDD" id="cd21667">
    <property type="entry name" value="gammaCoV_Nsp5_Mpro"/>
    <property type="match status" value="1"/>
</dbReference>
<dbReference type="CDD" id="cd21828">
    <property type="entry name" value="gammaCoV_Nsp7"/>
    <property type="match status" value="1"/>
</dbReference>
<dbReference type="CDD" id="cd21832">
    <property type="entry name" value="gammaCoV_Nsp8"/>
    <property type="match status" value="1"/>
</dbReference>
<dbReference type="CDD" id="cd21899">
    <property type="entry name" value="gammaCoV_Nsp9"/>
    <property type="match status" value="1"/>
</dbReference>
<dbReference type="CDD" id="cd21733">
    <property type="entry name" value="gammaCoV_PLPro"/>
    <property type="match status" value="1"/>
</dbReference>
<dbReference type="CDD" id="cd21557">
    <property type="entry name" value="Macro_X_Nsp3-like"/>
    <property type="match status" value="1"/>
</dbReference>
<dbReference type="CDD" id="cd21710">
    <property type="entry name" value="TM_Y_gammaCoV_Nsp3_C"/>
    <property type="match status" value="1"/>
</dbReference>
<dbReference type="Gene3D" id="1.10.8.1190">
    <property type="match status" value="1"/>
</dbReference>
<dbReference type="Gene3D" id="2.60.120.1680">
    <property type="match status" value="1"/>
</dbReference>
<dbReference type="Gene3D" id="6.10.250.2820">
    <property type="match status" value="1"/>
</dbReference>
<dbReference type="Gene3D" id="1.10.150.420">
    <property type="entry name" value="Coronavirus nonstructural protein 4 C-terminus"/>
    <property type="match status" value="1"/>
</dbReference>
<dbReference type="Gene3D" id="3.40.220.10">
    <property type="entry name" value="Leucine Aminopeptidase, subunit E, domain 1"/>
    <property type="match status" value="1"/>
</dbReference>
<dbReference type="Gene3D" id="1.10.1840.10">
    <property type="entry name" value="main proteinase (3clpro) structure, domain 3"/>
    <property type="match status" value="1"/>
</dbReference>
<dbReference type="Gene3D" id="1.10.8.370">
    <property type="entry name" value="nsp7 replicase"/>
    <property type="match status" value="1"/>
</dbReference>
<dbReference type="Gene3D" id="3.30.70.3540">
    <property type="entry name" value="Nsp8 replicase, head domain"/>
    <property type="match status" value="1"/>
</dbReference>
<dbReference type="Gene3D" id="2.40.10.250">
    <property type="entry name" value="Replicase NSP9"/>
    <property type="match status" value="1"/>
</dbReference>
<dbReference type="Gene3D" id="2.40.10.10">
    <property type="entry name" value="Trypsin-like serine proteases"/>
    <property type="match status" value="2"/>
</dbReference>
<dbReference type="InterPro" id="IPR049894">
    <property type="entry name" value="COV_NSP3_3ECTO"/>
</dbReference>
<dbReference type="InterPro" id="IPR043611">
    <property type="entry name" value="CoV_NSP3_C"/>
</dbReference>
<dbReference type="InterPro" id="IPR047566">
    <property type="entry name" value="CoV_NSP3_Y"/>
</dbReference>
<dbReference type="InterPro" id="IPR032505">
    <property type="entry name" value="CoV_NSP4_C"/>
</dbReference>
<dbReference type="InterPro" id="IPR043612">
    <property type="entry name" value="CoV_NSP4_N"/>
</dbReference>
<dbReference type="InterPro" id="IPR002589">
    <property type="entry name" value="Macro_dom"/>
</dbReference>
<dbReference type="InterPro" id="IPR043472">
    <property type="entry name" value="Macro_dom-like"/>
</dbReference>
<dbReference type="InterPro" id="IPR044371">
    <property type="entry name" value="Macro_X_NSP3-like"/>
</dbReference>
<dbReference type="InterPro" id="IPR036333">
    <property type="entry name" value="NSP10_sf_CoV"/>
</dbReference>
<dbReference type="InterPro" id="IPR040795">
    <property type="entry name" value="NSP2_gammaCoV"/>
</dbReference>
<dbReference type="InterPro" id="IPR044383">
    <property type="entry name" value="NSP2_IBV-like"/>
</dbReference>
<dbReference type="InterPro" id="IPR044357">
    <property type="entry name" value="NSP3_Ubl1_dom_CoV"/>
</dbReference>
<dbReference type="InterPro" id="IPR044353">
    <property type="entry name" value="Nsp3_Ubl2_dom_CoV"/>
</dbReference>
<dbReference type="InterPro" id="IPR038123">
    <property type="entry name" value="NSP4_C_sf_CoV"/>
</dbReference>
<dbReference type="InterPro" id="IPR044308">
    <property type="entry name" value="NSP5_Mpro_GammaCoV"/>
</dbReference>
<dbReference type="InterPro" id="IPR043610">
    <property type="entry name" value="NSP6_CoV"/>
</dbReference>
<dbReference type="InterPro" id="IPR044368">
    <property type="entry name" value="NSP6_gammaCoV"/>
</dbReference>
<dbReference type="InterPro" id="IPR014828">
    <property type="entry name" value="NSP7_CoV"/>
</dbReference>
<dbReference type="InterPro" id="IPR037204">
    <property type="entry name" value="NSP7_sf_CoV"/>
</dbReference>
<dbReference type="InterPro" id="IPR014829">
    <property type="entry name" value="NSP8_CoV"/>
</dbReference>
<dbReference type="InterPro" id="IPR037230">
    <property type="entry name" value="NSP8_sf_CoV"/>
</dbReference>
<dbReference type="InterPro" id="IPR014822">
    <property type="entry name" value="NSP9_CoV"/>
</dbReference>
<dbReference type="InterPro" id="IPR036499">
    <property type="entry name" value="NSP9_sf_CoV"/>
</dbReference>
<dbReference type="InterPro" id="IPR013016">
    <property type="entry name" value="Peptidase_C16_CoV"/>
</dbReference>
<dbReference type="InterPro" id="IPR008740">
    <property type="entry name" value="Peptidase_C30_CoV"/>
</dbReference>
<dbReference type="InterPro" id="IPR043477">
    <property type="entry name" value="Peptidase_C30_dom3_CoV"/>
</dbReference>
<dbReference type="InterPro" id="IPR009003">
    <property type="entry name" value="Peptidase_S1_PA"/>
</dbReference>
<dbReference type="InterPro" id="IPR043504">
    <property type="entry name" value="Peptidase_S1_PA_chymotrypsin"/>
</dbReference>
<dbReference type="InterPro" id="IPR043503">
    <property type="entry name" value="PLpro_palm_finger_dom_CoV"/>
</dbReference>
<dbReference type="InterPro" id="IPR043178">
    <property type="entry name" value="PLpro_thumb_sf_CoV"/>
</dbReference>
<dbReference type="InterPro" id="IPR018995">
    <property type="entry name" value="RNA_synth_NSP10_CoV"/>
</dbReference>
<dbReference type="Pfam" id="PF09401">
    <property type="entry name" value="CoV_NSP10"/>
    <property type="match status" value="1"/>
</dbReference>
<dbReference type="Pfam" id="PF19218">
    <property type="entry name" value="CoV_NSP3_C"/>
    <property type="match status" value="1"/>
</dbReference>
<dbReference type="Pfam" id="PF16348">
    <property type="entry name" value="CoV_NSP4_C"/>
    <property type="match status" value="1"/>
</dbReference>
<dbReference type="Pfam" id="PF19217">
    <property type="entry name" value="CoV_NSP4_N"/>
    <property type="match status" value="1"/>
</dbReference>
<dbReference type="Pfam" id="PF19213">
    <property type="entry name" value="CoV_NSP6"/>
    <property type="match status" value="1"/>
</dbReference>
<dbReference type="Pfam" id="PF08716">
    <property type="entry name" value="CoV_NSP7"/>
    <property type="match status" value="1"/>
</dbReference>
<dbReference type="Pfam" id="PF08717">
    <property type="entry name" value="CoV_NSP8"/>
    <property type="match status" value="1"/>
</dbReference>
<dbReference type="Pfam" id="PF08710">
    <property type="entry name" value="CoV_NSP9"/>
    <property type="match status" value="1"/>
</dbReference>
<dbReference type="Pfam" id="PF08715">
    <property type="entry name" value="CoV_peptidase"/>
    <property type="match status" value="1"/>
</dbReference>
<dbReference type="Pfam" id="PF01661">
    <property type="entry name" value="Macro"/>
    <property type="match status" value="1"/>
</dbReference>
<dbReference type="Pfam" id="PF17896">
    <property type="entry name" value="NSP2_gammaCoV"/>
    <property type="match status" value="1"/>
</dbReference>
<dbReference type="Pfam" id="PF05409">
    <property type="entry name" value="Peptidase_C30"/>
    <property type="match status" value="1"/>
</dbReference>
<dbReference type="SMART" id="SM00506">
    <property type="entry name" value="A1pp"/>
    <property type="match status" value="1"/>
</dbReference>
<dbReference type="SUPFAM" id="SSF144246">
    <property type="entry name" value="Coronavirus NSP10-like"/>
    <property type="match status" value="1"/>
</dbReference>
<dbReference type="SUPFAM" id="SSF140367">
    <property type="entry name" value="Coronavirus NSP7-like"/>
    <property type="match status" value="1"/>
</dbReference>
<dbReference type="SUPFAM" id="SSF143076">
    <property type="entry name" value="Coronavirus NSP8-like"/>
    <property type="match status" value="1"/>
</dbReference>
<dbReference type="SUPFAM" id="SSF52949">
    <property type="entry name" value="Macro domain-like"/>
    <property type="match status" value="1"/>
</dbReference>
<dbReference type="SUPFAM" id="SSF101816">
    <property type="entry name" value="Replicase NSP9"/>
    <property type="match status" value="1"/>
</dbReference>
<dbReference type="SUPFAM" id="SSF50494">
    <property type="entry name" value="Trypsin-like serine proteases"/>
    <property type="match status" value="1"/>
</dbReference>
<dbReference type="PROSITE" id="PS51993">
    <property type="entry name" value="COV_3ECTO"/>
    <property type="match status" value="1"/>
</dbReference>
<dbReference type="PROSITE" id="PS51952">
    <property type="entry name" value="COV_EXON_MTASE_COACT"/>
    <property type="match status" value="1"/>
</dbReference>
<dbReference type="PROSITE" id="PS51992">
    <property type="entry name" value="COV_NSP3_Y"/>
    <property type="match status" value="1"/>
</dbReference>
<dbReference type="PROSITE" id="PS51943">
    <property type="entry name" value="COV_NSP3A_UBL"/>
    <property type="match status" value="1"/>
</dbReference>
<dbReference type="PROSITE" id="PS51944">
    <property type="entry name" value="COV_NSP3D_UBL"/>
    <property type="match status" value="1"/>
</dbReference>
<dbReference type="PROSITE" id="PS51946">
    <property type="entry name" value="COV_NSP4C"/>
    <property type="match status" value="1"/>
</dbReference>
<dbReference type="PROSITE" id="PS51949">
    <property type="entry name" value="COV_NSP7"/>
    <property type="match status" value="1"/>
</dbReference>
<dbReference type="PROSITE" id="PS51950">
    <property type="entry name" value="COV_NSP8"/>
    <property type="match status" value="1"/>
</dbReference>
<dbReference type="PROSITE" id="PS51951">
    <property type="entry name" value="COV_NSP9_SSRNA_BD"/>
    <property type="match status" value="1"/>
</dbReference>
<dbReference type="PROSITE" id="PS51442">
    <property type="entry name" value="M_PRO"/>
    <property type="match status" value="1"/>
</dbReference>
<dbReference type="PROSITE" id="PS51154">
    <property type="entry name" value="MACRO"/>
    <property type="match status" value="1"/>
</dbReference>
<dbReference type="PROSITE" id="PS51124">
    <property type="entry name" value="PEPTIDASE_C16"/>
    <property type="match status" value="1"/>
</dbReference>
<feature type="chain" id="PRO_0000338314" description="Replicase polyprotein 1a">
    <location>
        <begin position="1"/>
        <end position="3951"/>
    </location>
</feature>
<feature type="chain" id="PRO_0000338315" description="Non-structural protein 2">
    <location>
        <begin position="1"/>
        <end position="673"/>
    </location>
</feature>
<feature type="chain" id="PRO_0000338316" description="Papain-like protease">
    <location>
        <begin position="674"/>
        <end position="2265"/>
    </location>
</feature>
<feature type="chain" id="PRO_0000338317" description="Non-structural protein 4">
    <location>
        <begin position="2266"/>
        <end position="2779"/>
    </location>
</feature>
<feature type="chain" id="PRO_0000338318" description="3C-like proteinase">
    <location>
        <begin position="2780"/>
        <end position="3086"/>
    </location>
</feature>
<feature type="chain" id="PRO_0000338319" description="Non-structural protein 6">
    <location>
        <begin position="3087"/>
        <end position="3379"/>
    </location>
</feature>
<feature type="chain" id="PRO_0000338320" description="Non-structural protein 7">
    <location>
        <begin position="3380"/>
        <end position="3462"/>
    </location>
</feature>
<feature type="chain" id="PRO_0000338321" description="Non-structural protein 8">
    <location>
        <begin position="3463"/>
        <end position="3672"/>
    </location>
</feature>
<feature type="chain" id="PRO_0000338322" description="Non-structural protein 9">
    <location>
        <begin position="3673"/>
        <end position="3783"/>
    </location>
</feature>
<feature type="chain" id="PRO_0000338323" description="Non-structural protein 10">
    <location>
        <begin position="3784"/>
        <end position="3928"/>
    </location>
</feature>
<feature type="chain" id="PRO_0000338324" description="Non-structural protein 11">
    <location>
        <begin position="3929"/>
        <end position="3951"/>
    </location>
</feature>
<feature type="topological domain" description="Cytoplasmic" evidence="2">
    <location>
        <begin position="1"/>
        <end position="1750"/>
    </location>
</feature>
<feature type="transmembrane region" description="Helical" evidence="6">
    <location>
        <begin position="1751"/>
        <end position="1771"/>
    </location>
</feature>
<feature type="topological domain" description="Lumenal" evidence="2">
    <location>
        <begin position="1772"/>
        <end position="1843"/>
    </location>
</feature>
<feature type="transmembrane region" description="Helical" evidence="6">
    <location>
        <begin position="1844"/>
        <end position="1864"/>
    </location>
</feature>
<feature type="topological domain" description="Cytoplasmic" evidence="2">
    <location>
        <begin position="1865"/>
        <end position="2280"/>
    </location>
</feature>
<feature type="transmembrane region" description="Helical" evidence="6">
    <location>
        <begin position="2281"/>
        <end position="2301"/>
    </location>
</feature>
<feature type="topological domain" description="Lumenal" evidence="2">
    <location>
        <begin position="2302"/>
        <end position="2559"/>
    </location>
</feature>
<feature type="transmembrane region" description="Helical" evidence="6">
    <location>
        <begin position="2560"/>
        <end position="2580"/>
    </location>
</feature>
<feature type="topological domain" description="Cytoplasmic" evidence="2">
    <location>
        <begin position="2581"/>
        <end position="2611"/>
    </location>
</feature>
<feature type="transmembrane region" description="Helical" evidence="6">
    <location>
        <begin position="2612"/>
        <end position="2632"/>
    </location>
</feature>
<feature type="topological domain" description="Lumenal" evidence="2">
    <location>
        <begin position="2633"/>
        <end position="2643"/>
    </location>
</feature>
<feature type="transmembrane region" description="Helical" evidence="6">
    <location>
        <begin position="2644"/>
        <end position="2664"/>
    </location>
</feature>
<feature type="topological domain" description="Cytoplasmic" evidence="2">
    <location>
        <begin position="2665"/>
        <end position="3096"/>
    </location>
</feature>
<feature type="transmembrane region" description="Helical" evidence="6">
    <location>
        <begin position="3097"/>
        <end position="3117"/>
    </location>
</feature>
<feature type="topological domain" description="Lumenal" evidence="2">
    <location>
        <begin position="3118"/>
        <end position="3121"/>
    </location>
</feature>
<feature type="transmembrane region" description="Helical" evidence="6">
    <location>
        <begin position="3122"/>
        <end position="3142"/>
    </location>
</feature>
<feature type="topological domain" description="Cytoplasmic" evidence="2">
    <location>
        <begin position="3143"/>
        <end position="3151"/>
    </location>
</feature>
<feature type="transmembrane region" description="Helical" evidence="6">
    <location>
        <begin position="3152"/>
        <end position="3172"/>
    </location>
</feature>
<feature type="topological domain" description="Lumenal" evidence="2">
    <location>
        <begin position="3173"/>
        <end position="3188"/>
    </location>
</feature>
<feature type="transmembrane region" description="Helical" evidence="6">
    <location>
        <begin position="3189"/>
        <end position="3209"/>
    </location>
</feature>
<feature type="topological domain" description="Cytoplasmic" evidence="2">
    <location>
        <begin position="3210"/>
        <end position="3257"/>
    </location>
</feature>
<feature type="transmembrane region" description="Helical" evidence="6">
    <location>
        <begin position="3258"/>
        <end position="3278"/>
    </location>
</feature>
<feature type="topological domain" description="Lumenal" evidence="2">
    <location>
        <begin position="3279"/>
        <end position="3296"/>
    </location>
</feature>
<feature type="transmembrane region" description="Helical" evidence="6">
    <location>
        <begin position="3297"/>
        <end position="3317"/>
    </location>
</feature>
<feature type="topological domain" description="Cytoplasmic" evidence="2">
    <location>
        <begin position="3318"/>
        <end position="3951"/>
    </location>
</feature>
<feature type="domain" description="Ubiquitin-like 1" evidence="7">
    <location>
        <begin position="675"/>
        <end position="780"/>
    </location>
</feature>
<feature type="domain" description="Macro" evidence="9">
    <location>
        <begin position="1003"/>
        <end position="1179"/>
    </location>
</feature>
<feature type="domain" description="Ubiquitin-like 2" evidence="7">
    <location>
        <begin position="1175"/>
        <end position="1227"/>
    </location>
</feature>
<feature type="domain" description="Peptidase C16" evidence="8">
    <location>
        <begin position="1236"/>
        <end position="1497"/>
    </location>
</feature>
<feature type="domain" description="3Ecto" evidence="17">
    <location>
        <begin position="1769"/>
        <end position="1833"/>
    </location>
</feature>
<feature type="domain" description="CoV Nsp3 Y" evidence="16">
    <location>
        <begin position="1911"/>
        <end position="2263"/>
    </location>
</feature>
<feature type="domain" description="Nsp4C" evidence="11">
    <location>
        <begin position="2684"/>
        <end position="2779"/>
    </location>
</feature>
<feature type="domain" description="Peptidase C30" evidence="10">
    <location>
        <begin position="2780"/>
        <end position="3086"/>
    </location>
</feature>
<feature type="domain" description="RdRp Nsp7 cofactor" evidence="12">
    <location>
        <begin position="3380"/>
        <end position="3462"/>
    </location>
</feature>
<feature type="domain" description="RdRp Nsp8 cofactor" evidence="13">
    <location>
        <begin position="3463"/>
        <end position="3672"/>
    </location>
</feature>
<feature type="domain" description="Nsp9 ssRNA-binding" evidence="14">
    <location>
        <begin position="3673"/>
        <end position="3783"/>
    </location>
</feature>
<feature type="domain" description="ExoN/MTase coactivator" evidence="15">
    <location>
        <begin position="3785"/>
        <end position="3926"/>
    </location>
</feature>
<feature type="zinc finger region" description="C4-type; degenerate" evidence="8">
    <location>
        <begin position="1353"/>
        <end position="1390"/>
    </location>
</feature>
<feature type="zinc finger region" evidence="1">
    <location>
        <begin position="3858"/>
        <end position="3878"/>
    </location>
</feature>
<feature type="zinc finger region" evidence="1">
    <location>
        <begin position="3904"/>
        <end position="3917"/>
    </location>
</feature>
<feature type="region of interest" description="Disordered" evidence="18">
    <location>
        <begin position="783"/>
        <end position="802"/>
    </location>
</feature>
<feature type="region of interest" description="HD1" evidence="2">
    <location>
        <begin position="1751"/>
        <end position="1864"/>
    </location>
</feature>
<feature type="region of interest" description="Y1" evidence="16">
    <location>
        <begin position="1911"/>
        <end position="2001"/>
    </location>
</feature>
<feature type="region of interest" description="ZF1" evidence="16">
    <location>
        <begin position="1915"/>
        <end position="1928"/>
    </location>
</feature>
<feature type="region of interest" description="ZF2" evidence="16">
    <location>
        <begin position="1961"/>
        <end position="1971"/>
    </location>
</feature>
<feature type="region of interest" description="CoV-Y" evidence="16">
    <location>
        <begin position="2002"/>
        <end position="2263"/>
    </location>
</feature>
<feature type="region of interest" description="Y2" evidence="16">
    <location>
        <begin position="2002"/>
        <end position="2104"/>
    </location>
</feature>
<feature type="region of interest" description="Y3" evidence="16">
    <location>
        <begin position="2105"/>
        <end position="2163"/>
    </location>
</feature>
<feature type="region of interest" description="Y4" evidence="16">
    <location>
        <begin position="2164"/>
        <end position="2263"/>
    </location>
</feature>
<feature type="region of interest" description="HD2" evidence="2">
    <location>
        <begin position="2281"/>
        <end position="2664"/>
    </location>
</feature>
<feature type="region of interest" description="HD3" evidence="2">
    <location>
        <begin position="3097"/>
        <end position="3317"/>
    </location>
</feature>
<feature type="active site" description="For PL-PRO activity" evidence="8">
    <location>
        <position position="1274"/>
    </location>
</feature>
<feature type="active site" description="For PL-PRO activity" evidence="8">
    <location>
        <position position="1437"/>
    </location>
</feature>
<feature type="active site" description="For PL-PRO activity" evidence="8">
    <location>
        <position position="1448"/>
    </location>
</feature>
<feature type="active site" description="For 3CL-PRO activity">
    <location>
        <position position="2820"/>
    </location>
</feature>
<feature type="active site" description="For 3CL-PRO activity">
    <location>
        <position position="2922"/>
    </location>
</feature>
<feature type="binding site" evidence="16">
    <location>
        <position position="1915"/>
    </location>
    <ligand>
        <name>Zn(2+)</name>
        <dbReference type="ChEBI" id="CHEBI:29105"/>
        <label>1</label>
    </ligand>
</feature>
<feature type="binding site" evidence="16">
    <location>
        <position position="1920"/>
    </location>
    <ligand>
        <name>Zn(2+)</name>
        <dbReference type="ChEBI" id="CHEBI:29105"/>
        <label>1</label>
    </ligand>
</feature>
<feature type="binding site" evidence="16">
    <location>
        <position position="1925"/>
    </location>
    <ligand>
        <name>Zn(2+)</name>
        <dbReference type="ChEBI" id="CHEBI:29105"/>
        <label>1</label>
    </ligand>
</feature>
<feature type="binding site" evidence="16">
    <location>
        <position position="1928"/>
    </location>
    <ligand>
        <name>Zn(2+)</name>
        <dbReference type="ChEBI" id="CHEBI:29105"/>
        <label>1</label>
    </ligand>
</feature>
<feature type="binding site" evidence="16">
    <location>
        <position position="1961"/>
    </location>
    <ligand>
        <name>Zn(2+)</name>
        <dbReference type="ChEBI" id="CHEBI:29105"/>
        <label>2</label>
    </ligand>
</feature>
<feature type="binding site" evidence="16">
    <location>
        <position position="1964"/>
    </location>
    <ligand>
        <name>Zn(2+)</name>
        <dbReference type="ChEBI" id="CHEBI:29105"/>
        <label>2</label>
    </ligand>
</feature>
<feature type="binding site" evidence="16">
    <location>
        <position position="1968"/>
    </location>
    <ligand>
        <name>Zn(2+)</name>
        <dbReference type="ChEBI" id="CHEBI:29105"/>
        <label>2</label>
    </ligand>
</feature>
<feature type="binding site" evidence="16">
    <location>
        <position position="1971"/>
    </location>
    <ligand>
        <name>Zn(2+)</name>
        <dbReference type="ChEBI" id="CHEBI:29105"/>
        <label>2</label>
    </ligand>
</feature>
<feature type="binding site" evidence="15">
    <location>
        <position position="3858"/>
    </location>
    <ligand>
        <name>Zn(2+)</name>
        <dbReference type="ChEBI" id="CHEBI:29105"/>
        <label>3</label>
    </ligand>
</feature>
<feature type="binding site" evidence="15">
    <location>
        <position position="3861"/>
    </location>
    <ligand>
        <name>Zn(2+)</name>
        <dbReference type="ChEBI" id="CHEBI:29105"/>
        <label>3</label>
    </ligand>
</feature>
<feature type="binding site" evidence="15">
    <location>
        <position position="3867"/>
    </location>
    <ligand>
        <name>Zn(2+)</name>
        <dbReference type="ChEBI" id="CHEBI:29105"/>
        <label>3</label>
    </ligand>
</feature>
<feature type="binding site" evidence="15">
    <location>
        <position position="3878"/>
    </location>
    <ligand>
        <name>Zn(2+)</name>
        <dbReference type="ChEBI" id="CHEBI:29105"/>
        <label>3</label>
    </ligand>
</feature>
<feature type="binding site" evidence="15">
    <location>
        <position position="3904"/>
    </location>
    <ligand>
        <name>Zn(2+)</name>
        <dbReference type="ChEBI" id="CHEBI:29105"/>
        <label>4</label>
    </ligand>
</feature>
<feature type="binding site" evidence="15">
    <location>
        <position position="3907"/>
    </location>
    <ligand>
        <name>Zn(2+)</name>
        <dbReference type="ChEBI" id="CHEBI:29105"/>
        <label>4</label>
    </ligand>
</feature>
<feature type="binding site" evidence="15">
    <location>
        <position position="3915"/>
    </location>
    <ligand>
        <name>Zn(2+)</name>
        <dbReference type="ChEBI" id="CHEBI:29105"/>
        <label>4</label>
    </ligand>
</feature>
<feature type="binding site" evidence="15">
    <location>
        <position position="3917"/>
    </location>
    <ligand>
        <name>Zn(2+)</name>
        <dbReference type="ChEBI" id="CHEBI:29105"/>
        <label>4</label>
    </ligand>
</feature>
<feature type="site" description="Cleavage; by PL-PRO" evidence="2">
    <location>
        <begin position="673"/>
        <end position="674"/>
    </location>
</feature>
<feature type="site" description="Cleavage; by PL-PRO" evidence="2">
    <location>
        <begin position="2265"/>
        <end position="2266"/>
    </location>
</feature>
<feature type="site" description="Cleavage; by 3CL-PRO" evidence="2">
    <location>
        <begin position="2779"/>
        <end position="2780"/>
    </location>
</feature>
<feature type="site" description="Cleavage; by 3CL-PRO" evidence="2">
    <location>
        <begin position="3086"/>
        <end position="3087"/>
    </location>
</feature>
<feature type="site" description="Cleavage; by 3CL-PRO" evidence="2">
    <location>
        <begin position="3379"/>
        <end position="3380"/>
    </location>
</feature>
<feature type="site" description="Cleavage; by 3CL-PRO" evidence="2">
    <location>
        <begin position="3462"/>
        <end position="3463"/>
    </location>
</feature>
<feature type="site" description="Cleavage; by 3CL-PRO" evidence="2">
    <location>
        <begin position="3672"/>
        <end position="3673"/>
    </location>
</feature>
<feature type="site" description="Cleavage; by 3CL-PRO" evidence="2">
    <location>
        <begin position="3783"/>
        <end position="3784"/>
    </location>
</feature>
<feature type="site" description="Cleavage; by 3CL-PRO" evidence="2">
    <location>
        <begin position="3928"/>
        <end position="3929"/>
    </location>
</feature>
<feature type="disulfide bond" evidence="17">
    <location>
        <begin position="1785"/>
        <end position="1811"/>
    </location>
</feature>
<feature type="disulfide bond" evidence="17">
    <location>
        <begin position="1802"/>
        <end position="1808"/>
    </location>
</feature>
<feature type="sequence variant" description="In strain: Isolate Vero cell-adapted p65.">
    <original>P</original>
    <variation>S</variation>
    <location>
        <position position="105"/>
    </location>
</feature>
<feature type="sequence variant" description="In strain: Isolate Vero cell-adapted p65.">
    <original>K</original>
    <variation>E</variation>
    <location>
        <position position="919"/>
    </location>
</feature>
<feature type="sequence variant" description="In strain: Isolate Vero cell-adapted p65.">
    <original>L</original>
    <variation>I</variation>
    <location>
        <position position="932"/>
    </location>
</feature>
<feature type="sequence variant" description="In strain: Isolate Vero cell-adapted p65.">
    <original>D</original>
    <variation>G</variation>
    <location>
        <position position="948"/>
    </location>
</feature>
<feature type="sequence variant" description="In strain: Isolate Vero cell-adapted p65.">
    <original>A</original>
    <variation>D</variation>
    <location>
        <position position="967"/>
    </location>
</feature>
<feature type="sequence variant" description="In strain: Isolate Vero cell-adapted p65.">
    <original>L</original>
    <variation>S</variation>
    <location>
        <position position="1133"/>
    </location>
</feature>
<feature type="sequence variant" description="In strain: Isolate Vero cell-adapted p65.">
    <original>P</original>
    <variation>S</variation>
    <location>
        <position position="1388"/>
    </location>
</feature>
<feature type="sequence variant" description="In strain: Isolate Vero cell-adapted p65.">
    <original>L</original>
    <variation>F</variation>
    <location>
        <position position="1753"/>
    </location>
</feature>
<feature type="sequence variant" description="In strain: Isolate Vero cell-adapted p65.">
    <original>Q</original>
    <variation>H</variation>
    <location>
        <position position="2561"/>
    </location>
</feature>
<feature type="sequence variant" description="In strain: Isolate Vero cell-adapted p65.">
    <location>
        <position position="3058"/>
    </location>
</feature>
<feature type="sequence variant" description="In strain: Isolate Vero cell-adapted p65.">
    <original>N</original>
    <variation>S</variation>
    <location>
        <position position="3242"/>
    </location>
</feature>
<feature type="sequence variant" description="In strain: Isolate Vero cell-adapted p65.">
    <original>V</original>
    <variation>A</variation>
    <location>
        <position position="3409"/>
    </location>
</feature>
<feature type="sequence variant" description="In strain: Isolate Vero cell-adapted p65.">
    <original>I</original>
    <variation>T</variation>
    <location>
        <position position="3418"/>
    </location>
</feature>
<feature type="sequence variant" description="In strain: Isolate Vero cell-adapted p65.">
    <original>IP</original>
    <variation>MT</variation>
    <location>
        <begin position="3471"/>
        <end position="3472"/>
    </location>
</feature>
<feature type="sequence variant" description="In strain: Isolate Vero cell-adapted p65.">
    <original>V</original>
    <variation>D</variation>
    <location>
        <position position="3751"/>
    </location>
</feature>
<feature type="sequence variant" description="In strain: Isolate Vero cell-adapted p65.">
    <original>S</original>
    <variation>G</variation>
    <location>
        <position position="3870"/>
    </location>
</feature>
<feature type="sequence variant" description="In strain: Isolate Vero cell-adapted p65.">
    <original>D</original>
    <variation>G</variation>
    <location>
        <position position="3935"/>
    </location>
</feature>
<feature type="mutagenesis site" description="No processing between p87 and p195." evidence="24">
    <original>G</original>
    <variation>A</variation>
    <location>
        <position position="673"/>
    </location>
</feature>
<feature type="mutagenesis site" description="No effect." evidence="24">
    <original>T</original>
    <variation>S</variation>
    <location>
        <position position="676"/>
    </location>
</feature>
<feature type="mutagenesis site" description="Complete loss of PL-PRO activity." evidence="24">
    <original>C</original>
    <variation>S</variation>
    <location>
        <position position="1274"/>
    </location>
</feature>
<feature type="mutagenesis site" description="Complete loss of PL-PRO activity." evidence="24">
    <original>H</original>
    <variation>K</variation>
    <location>
        <position position="1437"/>
    </location>
</feature>
<feature type="mutagenesis site" description="Almost no processing between p195 and peptide HD2." evidence="19">
    <original>A</original>
    <variation>N</variation>
    <location>
        <position position="2264"/>
    </location>
</feature>
<feature type="mutagenesis site" description="No processing between p195 and peptide HD2." evidence="19">
    <location>
        <begin position="2265"/>
        <end position="2266"/>
    </location>
</feature>
<feature type="mutagenesis site" description="No effect." evidence="19">
    <original>G</original>
    <variation>A</variation>
    <location>
        <position position="2265"/>
    </location>
</feature>
<feature type="mutagenesis site" description="Almost no processing between p195 and peptide HD2." evidence="19">
    <original>G</original>
    <variation>N</variation>
    <location>
        <position position="2265"/>
    </location>
</feature>
<feature type="mutagenesis site" description="No effect." evidence="19">
    <original>G</original>
    <variation>N</variation>
    <location>
        <position position="2266"/>
    </location>
</feature>
<feature type="mutagenesis site" description="Complete loss of 3CL-PRO activity." evidence="21">
    <original>H</original>
    <variation>K</variation>
    <variation>G</variation>
    <location>
        <position position="2820"/>
    </location>
</feature>
<feature type="mutagenesis site" description="No effect." evidence="21">
    <original>E</original>
    <variation>Q</variation>
    <location>
        <position position="2841"/>
    </location>
</feature>
<feature type="mutagenesis site" description="No effect." evidence="21">
    <original>E</original>
    <variation>D</variation>
    <variation>N</variation>
    <variation>Q</variation>
    <location>
        <position position="2843"/>
    </location>
</feature>
<feature type="mutagenesis site" description="Complete loss of 3CL-PRO activity." evidence="21">
    <original>C</original>
    <variation>A</variation>
    <location>
        <position position="2922"/>
    </location>
</feature>
<feature type="mutagenesis site" description="Partial loss of 3CL-PRO activity." evidence="21">
    <original>C</original>
    <variation>S</variation>
    <location>
        <position position="2922"/>
    </location>
</feature>
<feature type="mutagenesis site" description="No processing between 3CL-PRO and p34." evidence="20">
    <original>Q</original>
    <variation>E</variation>
    <location>
        <position position="3086"/>
    </location>
</feature>
<feature type="mutagenesis site" description="No effect." evidence="20">
    <original>Q</original>
    <variation>E</variation>
    <location>
        <position position="3365"/>
    </location>
</feature>
<feature type="mutagenesis site" description="No processing between p34 and p9." evidence="20">
    <original>Q</original>
    <variation>E</variation>
    <location>
        <position position="3379"/>
    </location>
</feature>
<feature type="mutagenesis site" description="No processing between p9 and p24." evidence="23">
    <original>Q</original>
    <variation>E</variation>
    <location>
        <position position="3462"/>
    </location>
</feature>
<feature type="mutagenesis site" description="No processing between p24 and p10." evidence="22 23">
    <original>Q</original>
    <variation>E</variation>
    <location>
        <position position="3672"/>
    </location>
</feature>
<feature type="mutagenesis site" description="No processing between p10 and p16." evidence="22 23">
    <original>Q</original>
    <variation>E</variation>
    <location>
        <position position="3783"/>
    </location>
</feature>
<feature type="mutagenesis site" description="No processing between p16 and p100." evidence="21">
    <original>Q</original>
    <variation>E</variation>
    <location>
        <position position="3928"/>
    </location>
</feature>
<organism>
    <name type="scientific">Avian infectious bronchitis virus (strain Beaudette)</name>
    <name type="common">IBV</name>
    <dbReference type="NCBI Taxonomy" id="11122"/>
    <lineage>
        <taxon>Viruses</taxon>
        <taxon>Riboviria</taxon>
        <taxon>Orthornavirae</taxon>
        <taxon>Pisuviricota</taxon>
        <taxon>Pisoniviricetes</taxon>
        <taxon>Nidovirales</taxon>
        <taxon>Cornidovirineae</taxon>
        <taxon>Coronaviridae</taxon>
        <taxon>Orthocoronavirinae</taxon>
        <taxon>Gammacoronavirus</taxon>
        <taxon>Igacovirus</taxon>
        <taxon>Avian coronavirus</taxon>
    </lineage>
</organism>
<reference key="1">
    <citation type="journal article" date="1987" name="J. Gen. Virol.">
        <title>Completion of the sequence of the genome of the coronavirus avian infectious bronchitis virus.</title>
        <authorList>
            <person name="Boursnell M.E.G."/>
            <person name="Brown T.D.K."/>
            <person name="Foulds I.J."/>
            <person name="Green P.F."/>
            <person name="Tomley F.M."/>
            <person name="Binns M.M."/>
        </authorList>
    </citation>
    <scope>NUCLEOTIDE SEQUENCE [GENOMIC RNA]</scope>
</reference>
<reference key="2">
    <citation type="journal article" date="2005" name="Biochem. Biophys. Res. Commun.">
        <title>Selection of and recombination between minor variants lead to the adaptation of an avian coronavirus to primate cells.</title>
        <authorList>
            <person name="Fang S.G."/>
            <person name="Shen S."/>
            <person name="Tay F.P."/>
            <person name="Liu D.X."/>
        </authorList>
    </citation>
    <scope>NUCLEOTIDE SEQUENCE [GENOMIC RNA]</scope>
    <source>
        <strain>Isolate Vero cell-adapted p65</strain>
    </source>
</reference>
<reference key="3">
    <citation type="journal article" date="1995" name="Virology">
        <title>Identification, expression, and processing of an 87-kDa polypeptide encoded by ORF 1a of the coronavirus infectious bronchitis virus.</title>
        <authorList>
            <person name="Liu D.X."/>
            <person name="Tibbles K.W."/>
            <person name="Cavanagh D."/>
            <person name="Brown T.D.K."/>
            <person name="Brierley I."/>
        </authorList>
    </citation>
    <scope>PROTEOLYTIC CLEAVAGE (REPLICASE POLYPROTEIN 1A)</scope>
</reference>
<reference key="4">
    <citation type="journal article" date="1995" name="Virology">
        <title>Characterisation and mutational analysis of an ORF 1a-encoding proteinase domain responsible for proteolytic processing of the infectious bronchitis virus 1a/1b polyprotein.</title>
        <authorList>
            <person name="Liu D.X."/>
            <person name="Brown T.D.K."/>
        </authorList>
    </citation>
    <scope>CHARACTERIZATION OF 3CL-PRO</scope>
    <scope>MUTAGENESIS OF HIS-2820; GLU-2841; GLU-2843; CYS-2922 AND GLN-3928</scope>
</reference>
<reference key="5">
    <citation type="journal article" date="1997" name="J. Virol.">
        <title>Proteolytic processing of the coronavirus infectious bronchitis virus 1a polyprotein: identification of a 10-kilodalton polypeptide and determination of its cleavage sites.</title>
        <authorList>
            <person name="Liu D.X."/>
            <person name="Xu H.Y."/>
            <person name="Brown T.D.K."/>
        </authorList>
    </citation>
    <scope>PROTEOLYTIC CLEAVAGE (REPLICASE POLYPROTEIN 1A)</scope>
    <scope>MUTAGENESIS OF GLN-3672 AND GLN-3783</scope>
</reference>
<reference key="6">
    <citation type="journal article" date="1998" name="Virology">
        <title>Identification of a 24-kDa polypeptide processed from the coronavirus infectious bronchitis virus 1a polyprotein by the 3C-like proteinase and determination of its cleavage sites.</title>
        <authorList>
            <person name="Ng L.F.P."/>
            <person name="Liu D.X."/>
        </authorList>
    </citation>
    <scope>PROTEOLYTIC CLEAVAGE (REPLICASE POLYPROTEIN 1A)</scope>
    <scope>MUTAGENESIS OF GLN-3462; GLN-3672 AND GLN-3783</scope>
</reference>
<reference key="7">
    <citation type="journal article" date="1998" name="Virology">
        <title>Characterization of the two overlapping papain-like proteinase domains encoded in gene 1 of the coronavirus infectious bronchitis virus and determination of the C-terminal cleavage site of an 87-kDa protein.</title>
        <authorList>
            <person name="Lim K.P."/>
            <person name="Liu D.X."/>
        </authorList>
    </citation>
    <scope>PROTEOLYTIC CLEAVAGE (REPLICASE POLYPROTEIN 1A)</scope>
    <scope>CHARACTERIZATION OF PAPAIN-LIKE PROTEINASE DOMAINS</scope>
    <scope>MUTAGENESIS OF GLY-673; THR-676; CYS-1274 AND HIS-1437</scope>
</reference>
<reference key="8">
    <citation type="journal article" date="1998" name="Virology">
        <title>Proteolytic mapping of the coronavirus infectious bronchitis virus 1b polyprotein: evidence for the presence of four cleavage sites of the 3C-like proteinase and identification of two novel cleavage products.</title>
        <authorList>
            <person name="Liu D.X."/>
            <person name="Shen S."/>
            <person name="Xu H.Y."/>
            <person name="Wang S.F."/>
        </authorList>
    </citation>
    <scope>PROTEOLYTIC CLEAVAGE (REPLICASE POLYPROTEIN 1A)</scope>
</reference>
<reference key="9">
    <citation type="journal article" date="2000" name="J. Virol.">
        <title>Identification of a novel cleavage activity of the first papain-like proteinase domain encoded by open reading frame 1a of the coronavirus avian infectious bronchitis virus and characterization of the cleavage products.</title>
        <authorList>
            <person name="Lim K.P."/>
            <person name="Ng L.F.P."/>
            <person name="Liu D.X."/>
        </authorList>
    </citation>
    <scope>PROTEOLYTIC CLEAVAGE (REPLICASE POLYPROTEIN 1A)</scope>
    <scope>GLYCOSYLATION OF NSP4</scope>
    <scope>MUTAGENESIS OF ALA-2264; GLY-2265 AND GLY-2266</scope>
</reference>
<reference key="10">
    <citation type="journal article" date="2000" name="Virology">
        <title>Further characterization of the coronavirus infectious bronchitis virus 3C-like proteinase and determination of a new cleavage site.</title>
        <authorList>
            <person name="Ng L.F.P."/>
            <person name="Liu D.X."/>
        </authorList>
    </citation>
    <scope>PROTEOLYTIC CLEAVAGE (REPLICASE POLYPROTEIN 1A)</scope>
    <scope>MUTAGENESIS OF GLN-3086; GLN-3365 AND GLN-3379</scope>
</reference>
<reference key="11">
    <citation type="journal article" date="2001" name="Virology">
        <title>Further identification and characterization of novel intermediate and mature cleavage products released from the ORF 1b region of the avian coronavirus infectious bronchitis virus 1a/1b polyprotein.</title>
        <authorList>
            <person name="Xu H.Y."/>
            <person name="Lim K.P."/>
            <person name="Shen S."/>
            <person name="Liu D.X."/>
        </authorList>
    </citation>
    <scope>PROTEOLYTIC CLEAVAGE (REPLICASE POLYPROTEIN 1A)</scope>
    <scope>SUBCELLULAR LOCATION</scope>
</reference>
<reference key="12">
    <citation type="journal article" date="2002" name="J. Virol.">
        <title>Membrane association and dimerization of a cysteine-rich, 16-kilodalton polypeptide released from the C-terminal region of the coronavirus infectious bronchitis virus 1a polyprotein.</title>
        <authorList>
            <person name="Ng L.F.P."/>
            <person name="Liu D.X."/>
        </authorList>
    </citation>
    <scope>CHARACTERIZATION (NON-STRUCTURAL PROTEIN 10)</scope>
    <scope>MUTAGENESIS</scope>
</reference>
<proteinExistence type="evidence at protein level"/>
<accession>P0C6V3</accession>
<accession>P27920</accession>
<organismHost>
    <name type="scientific">Gallus gallus</name>
    <name type="common">Chicken</name>
    <dbReference type="NCBI Taxonomy" id="9031"/>
</organismHost>
<gene>
    <name type="ORF">1a</name>
</gene>
<protein>
    <recommendedName>
        <fullName>Replicase polyprotein 1a</fullName>
        <shortName>pp1a</shortName>
    </recommendedName>
    <alternativeName>
        <fullName>ORF1a polyprotein</fullName>
    </alternativeName>
    <component>
        <recommendedName>
            <fullName>Non-structural protein 2</fullName>
            <shortName>nsp2</shortName>
        </recommendedName>
        <alternativeName>
            <fullName>p87</fullName>
        </alternativeName>
    </component>
    <component>
        <recommendedName>
            <fullName>Papain-like protease</fullName>
            <shortName>PL-PRO</shortName>
            <ecNumber evidence="2">3.4.19.12</ecNumber>
            <ecNumber evidence="2">3.4.22.-</ecNumber>
        </recommendedName>
        <alternativeName>
            <fullName>Non-structural protein 3</fullName>
            <shortName>nsp3</shortName>
        </alternativeName>
        <alternativeName>
            <fullName>p195</fullName>
        </alternativeName>
    </component>
    <component>
        <recommendedName>
            <fullName>Non-structural protein 4</fullName>
            <shortName>nsp4</shortName>
        </recommendedName>
        <alternativeName>
            <fullName>Peptide HD2</fullName>
        </alternativeName>
        <alternativeName>
            <fullName>p41</fullName>
        </alternativeName>
    </component>
    <component>
        <recommendedName>
            <fullName>3C-like proteinase</fullName>
            <shortName>3CL-PRO</shortName>
            <shortName>3CLp</shortName>
            <ecNumber>3.4.22.-</ecNumber>
        </recommendedName>
        <alternativeName>
            <fullName>Main protease</fullName>
            <shortName>Mpro</shortName>
        </alternativeName>
        <alternativeName>
            <fullName>Non-structural protein 5</fullName>
            <shortName>nsp5</shortName>
        </alternativeName>
        <alternativeName>
            <fullName>p33</fullName>
        </alternativeName>
    </component>
    <component>
        <recommendedName>
            <fullName>Non-structural protein 6</fullName>
            <shortName>nsp6</shortName>
        </recommendedName>
        <alternativeName>
            <fullName>p34</fullName>
        </alternativeName>
    </component>
    <component>
        <recommendedName>
            <fullName>Non-structural protein 7</fullName>
            <shortName>nsp7</shortName>
        </recommendedName>
        <alternativeName>
            <fullName>p9</fullName>
        </alternativeName>
    </component>
    <component>
        <recommendedName>
            <fullName>Non-structural protein 8</fullName>
            <shortName>nsp8</shortName>
        </recommendedName>
        <alternativeName>
            <fullName>p24</fullName>
        </alternativeName>
    </component>
    <component>
        <recommendedName>
            <fullName>Non-structural protein 9</fullName>
            <shortName>nsp9</shortName>
        </recommendedName>
        <alternativeName>
            <fullName>p10</fullName>
        </alternativeName>
    </component>
    <component>
        <recommendedName>
            <fullName>Non-structural protein 10</fullName>
            <shortName>nsp10</shortName>
        </recommendedName>
        <alternativeName>
            <fullName>Growth factor-like peptide</fullName>
            <shortName>GFL</shortName>
        </alternativeName>
        <alternativeName>
            <fullName>p16</fullName>
        </alternativeName>
    </component>
    <component>
        <recommendedName>
            <fullName>Non-structural protein 11</fullName>
            <shortName>nsp11</shortName>
        </recommendedName>
    </component>
</protein>
<keyword id="KW-1072">Activation of host autophagy by virus</keyword>
<keyword id="KW-1015">Disulfide bond</keyword>
<keyword id="KW-1035">Host cytoplasm</keyword>
<keyword id="KW-1038">Host endoplasmic reticulum</keyword>
<keyword id="KW-1043">Host membrane</keyword>
<keyword id="KW-0945">Host-virus interaction</keyword>
<keyword id="KW-0378">Hydrolase</keyword>
<keyword id="KW-0456">Lyase</keyword>
<keyword id="KW-0472">Membrane</keyword>
<keyword id="KW-0479">Metal-binding</keyword>
<keyword id="KW-0645">Protease</keyword>
<keyword id="KW-1185">Reference proteome</keyword>
<keyword id="KW-0677">Repeat</keyword>
<keyword id="KW-0688">Ribosomal frameshifting</keyword>
<keyword id="KW-0694">RNA-binding</keyword>
<keyword id="KW-0788">Thiol protease</keyword>
<keyword id="KW-0812">Transmembrane</keyword>
<keyword id="KW-1133">Transmembrane helix</keyword>
<keyword id="KW-0862">Zinc</keyword>
<keyword id="KW-0863">Zinc-finger</keyword>